<accession>B1HMW8</accession>
<protein>
    <recommendedName>
        <fullName evidence="1">Large ribosomal subunit protein uL5</fullName>
    </recommendedName>
    <alternativeName>
        <fullName evidence="2">50S ribosomal protein L5</fullName>
    </alternativeName>
</protein>
<feature type="chain" id="PRO_1000142421" description="Large ribosomal subunit protein uL5">
    <location>
        <begin position="1"/>
        <end position="179"/>
    </location>
</feature>
<organism>
    <name type="scientific">Lysinibacillus sphaericus (strain C3-41)</name>
    <dbReference type="NCBI Taxonomy" id="444177"/>
    <lineage>
        <taxon>Bacteria</taxon>
        <taxon>Bacillati</taxon>
        <taxon>Bacillota</taxon>
        <taxon>Bacilli</taxon>
        <taxon>Bacillales</taxon>
        <taxon>Bacillaceae</taxon>
        <taxon>Lysinibacillus</taxon>
    </lineage>
</organism>
<comment type="function">
    <text evidence="1">This is one of the proteins that bind and probably mediate the attachment of the 5S RNA into the large ribosomal subunit, where it forms part of the central protuberance. In the 70S ribosome it contacts protein S13 of the 30S subunit (bridge B1b), connecting the 2 subunits; this bridge is implicated in subunit movement. Contacts the P site tRNA; the 5S rRNA and some of its associated proteins might help stabilize positioning of ribosome-bound tRNAs.</text>
</comment>
<comment type="subunit">
    <text evidence="1">Part of the 50S ribosomal subunit; part of the 5S rRNA/L5/L18/L25 subcomplex. Contacts the 5S rRNA and the P site tRNA. Forms a bridge to the 30S subunit in the 70S ribosome.</text>
</comment>
<comment type="similarity">
    <text evidence="1">Belongs to the universal ribosomal protein uL5 family.</text>
</comment>
<gene>
    <name evidence="1" type="primary">rplE</name>
    <name type="ordered locus">Bsph_4602</name>
</gene>
<dbReference type="EMBL" id="CP000817">
    <property type="protein sequence ID" value="ACA42046.1"/>
    <property type="molecule type" value="Genomic_DNA"/>
</dbReference>
<dbReference type="RefSeq" id="WP_004233654.1">
    <property type="nucleotide sequence ID" value="NC_010382.1"/>
</dbReference>
<dbReference type="SMR" id="B1HMW8"/>
<dbReference type="EnsemblBacteria" id="ACA42046">
    <property type="protein sequence ID" value="ACA42046"/>
    <property type="gene ID" value="Bsph_4602"/>
</dbReference>
<dbReference type="GeneID" id="74907553"/>
<dbReference type="KEGG" id="lsp:Bsph_4602"/>
<dbReference type="HOGENOM" id="CLU_061015_2_1_9"/>
<dbReference type="Proteomes" id="UP000002164">
    <property type="component" value="Chromosome"/>
</dbReference>
<dbReference type="GO" id="GO:1990904">
    <property type="term" value="C:ribonucleoprotein complex"/>
    <property type="evidence" value="ECO:0007669"/>
    <property type="project" value="UniProtKB-KW"/>
</dbReference>
<dbReference type="GO" id="GO:0005840">
    <property type="term" value="C:ribosome"/>
    <property type="evidence" value="ECO:0007669"/>
    <property type="project" value="UniProtKB-KW"/>
</dbReference>
<dbReference type="GO" id="GO:0019843">
    <property type="term" value="F:rRNA binding"/>
    <property type="evidence" value="ECO:0007669"/>
    <property type="project" value="UniProtKB-UniRule"/>
</dbReference>
<dbReference type="GO" id="GO:0003735">
    <property type="term" value="F:structural constituent of ribosome"/>
    <property type="evidence" value="ECO:0007669"/>
    <property type="project" value="InterPro"/>
</dbReference>
<dbReference type="GO" id="GO:0000049">
    <property type="term" value="F:tRNA binding"/>
    <property type="evidence" value="ECO:0007669"/>
    <property type="project" value="UniProtKB-UniRule"/>
</dbReference>
<dbReference type="GO" id="GO:0006412">
    <property type="term" value="P:translation"/>
    <property type="evidence" value="ECO:0007669"/>
    <property type="project" value="UniProtKB-UniRule"/>
</dbReference>
<dbReference type="FunFam" id="3.30.1440.10:FF:000001">
    <property type="entry name" value="50S ribosomal protein L5"/>
    <property type="match status" value="1"/>
</dbReference>
<dbReference type="Gene3D" id="3.30.1440.10">
    <property type="match status" value="1"/>
</dbReference>
<dbReference type="HAMAP" id="MF_01333_B">
    <property type="entry name" value="Ribosomal_uL5_B"/>
    <property type="match status" value="1"/>
</dbReference>
<dbReference type="InterPro" id="IPR002132">
    <property type="entry name" value="Ribosomal_uL5"/>
</dbReference>
<dbReference type="InterPro" id="IPR020930">
    <property type="entry name" value="Ribosomal_uL5_bac-type"/>
</dbReference>
<dbReference type="InterPro" id="IPR031309">
    <property type="entry name" value="Ribosomal_uL5_C"/>
</dbReference>
<dbReference type="InterPro" id="IPR020929">
    <property type="entry name" value="Ribosomal_uL5_CS"/>
</dbReference>
<dbReference type="InterPro" id="IPR022803">
    <property type="entry name" value="Ribosomal_uL5_dom_sf"/>
</dbReference>
<dbReference type="InterPro" id="IPR031310">
    <property type="entry name" value="Ribosomal_uL5_N"/>
</dbReference>
<dbReference type="NCBIfam" id="NF000585">
    <property type="entry name" value="PRK00010.1"/>
    <property type="match status" value="1"/>
</dbReference>
<dbReference type="PANTHER" id="PTHR11994">
    <property type="entry name" value="60S RIBOSOMAL PROTEIN L11-RELATED"/>
    <property type="match status" value="1"/>
</dbReference>
<dbReference type="Pfam" id="PF00281">
    <property type="entry name" value="Ribosomal_L5"/>
    <property type="match status" value="1"/>
</dbReference>
<dbReference type="Pfam" id="PF00673">
    <property type="entry name" value="Ribosomal_L5_C"/>
    <property type="match status" value="1"/>
</dbReference>
<dbReference type="PIRSF" id="PIRSF002161">
    <property type="entry name" value="Ribosomal_L5"/>
    <property type="match status" value="1"/>
</dbReference>
<dbReference type="SUPFAM" id="SSF55282">
    <property type="entry name" value="RL5-like"/>
    <property type="match status" value="1"/>
</dbReference>
<dbReference type="PROSITE" id="PS00358">
    <property type="entry name" value="RIBOSOMAL_L5"/>
    <property type="match status" value="1"/>
</dbReference>
<sequence length="179" mass="20035">MSRLKEKYLNEVSPALMSKFGYKSVMQLPKVEKIVINMGVGDAVQNSKALDAAVEELTIITGQKPVVTKAKKSIAGFRLREGMPIGAKVTLRGERMYEFLDKLISISLPRVRDFRGVSKKAFDGRGNYTLGVKEQLIFPEIDYDKVSKVRGMDIVIVTTANSDEEARELLTQFGMPFQK</sequence>
<keyword id="KW-0687">Ribonucleoprotein</keyword>
<keyword id="KW-0689">Ribosomal protein</keyword>
<keyword id="KW-0694">RNA-binding</keyword>
<keyword id="KW-0699">rRNA-binding</keyword>
<keyword id="KW-0820">tRNA-binding</keyword>
<reference key="1">
    <citation type="journal article" date="2008" name="J. Bacteriol.">
        <title>Complete genome sequence of the mosquitocidal bacterium Bacillus sphaericus C3-41 and comparison with those of closely related Bacillus species.</title>
        <authorList>
            <person name="Hu X."/>
            <person name="Fan W."/>
            <person name="Han B."/>
            <person name="Liu H."/>
            <person name="Zheng D."/>
            <person name="Li Q."/>
            <person name="Dong W."/>
            <person name="Yan J."/>
            <person name="Gao M."/>
            <person name="Berry C."/>
            <person name="Yuan Z."/>
        </authorList>
    </citation>
    <scope>NUCLEOTIDE SEQUENCE [LARGE SCALE GENOMIC DNA]</scope>
    <source>
        <strain>C3-41</strain>
    </source>
</reference>
<evidence type="ECO:0000255" key="1">
    <source>
        <dbReference type="HAMAP-Rule" id="MF_01333"/>
    </source>
</evidence>
<evidence type="ECO:0000305" key="2"/>
<proteinExistence type="inferred from homology"/>
<name>RL5_LYSSC</name>